<comment type="function">
    <text evidence="3">Catalyzes the oxidation of racemic ipsdienol and (4R)-(-)-ipsdienol to form ipsdienone (2-methyl-6-methylene-2,7-octadien-4-one), an intermediate in the biosynthesis of pheromonal ipsdienol in male pine engraver beetles. In contrast, (4S)-(+)-ipsdienol is not a substrate.</text>
</comment>
<comment type="catalytic activity">
    <reaction evidence="3">
        <text>(4R)-ipsdienol + NADP(+) = ipsdienone + NADPH + H(+)</text>
        <dbReference type="Rhea" id="RHEA:45116"/>
        <dbReference type="ChEBI" id="CHEBI:15378"/>
        <dbReference type="ChEBI" id="CHEBI:57783"/>
        <dbReference type="ChEBI" id="CHEBI:58349"/>
        <dbReference type="ChEBI" id="CHEBI:84966"/>
        <dbReference type="ChEBI" id="CHEBI:84970"/>
        <dbReference type="EC" id="1.1.1.386"/>
    </reaction>
</comment>
<comment type="catalytic activity">
    <reaction evidence="3">
        <text>(4R)-ipsdienol + NAD(+) = ipsdienone + NADH + H(+)</text>
        <dbReference type="Rhea" id="RHEA:45120"/>
        <dbReference type="ChEBI" id="CHEBI:15378"/>
        <dbReference type="ChEBI" id="CHEBI:57540"/>
        <dbReference type="ChEBI" id="CHEBI:57945"/>
        <dbReference type="ChEBI" id="CHEBI:84966"/>
        <dbReference type="ChEBI" id="CHEBI:84970"/>
        <dbReference type="EC" id="1.1.1.386"/>
    </reaction>
</comment>
<comment type="biophysicochemical properties">
    <kinetics>
        <Vmax evidence="3">17.2 nmol/min/mg enzyme</Vmax>
    </kinetics>
</comment>
<comment type="subcellular location">
    <subcellularLocation>
        <location evidence="3">Cytoplasm</location>
        <location evidence="3">Cytosol</location>
    </subcellularLocation>
</comment>
<comment type="tissue specificity">
    <text evidence="3">Specifically expressed in male midguts. Expressed at higher level in the anterior midgut of fed males.</text>
</comment>
<comment type="similarity">
    <text evidence="5">Belongs to the short-chain dehydrogenases/reductases (SDR) family.</text>
</comment>
<accession>G5DGA8</accession>
<proteinExistence type="evidence at protein level"/>
<organism>
    <name type="scientific">Ips pini</name>
    <name type="common">Pine engraver beetle</name>
    <dbReference type="NCBI Taxonomy" id="102803"/>
    <lineage>
        <taxon>Eukaryota</taxon>
        <taxon>Metazoa</taxon>
        <taxon>Ecdysozoa</taxon>
        <taxon>Arthropoda</taxon>
        <taxon>Hexapoda</taxon>
        <taxon>Insecta</taxon>
        <taxon>Pterygota</taxon>
        <taxon>Neoptera</taxon>
        <taxon>Endopterygota</taxon>
        <taxon>Coleoptera</taxon>
        <taxon>Polyphaga</taxon>
        <taxon>Cucujiformia</taxon>
        <taxon>Curculionidae</taxon>
        <taxon>Scolytinae</taxon>
        <taxon>Ips</taxon>
    </lineage>
</organism>
<dbReference type="EC" id="1.1.1.386" evidence="3"/>
<dbReference type="EMBL" id="JN653323">
    <property type="protein sequence ID" value="AEQ59233.1"/>
    <property type="molecule type" value="mRNA"/>
</dbReference>
<dbReference type="SMR" id="G5DGA8"/>
<dbReference type="KEGG" id="ag:AEQ59233"/>
<dbReference type="BioCyc" id="MetaCyc:MONOMER-18350"/>
<dbReference type="BRENDA" id="1.1.1.386">
    <property type="organism ID" value="7894"/>
</dbReference>
<dbReference type="SABIO-RK" id="G5DGA8"/>
<dbReference type="GO" id="GO:0005829">
    <property type="term" value="C:cytosol"/>
    <property type="evidence" value="ECO:0000314"/>
    <property type="project" value="UniProtKB"/>
</dbReference>
<dbReference type="GO" id="GO:0016616">
    <property type="term" value="F:oxidoreductase activity, acting on the CH-OH group of donors, NAD or NADP as acceptor"/>
    <property type="evidence" value="ECO:0000314"/>
    <property type="project" value="UniProtKB"/>
</dbReference>
<dbReference type="GO" id="GO:0042811">
    <property type="term" value="P:pheromone biosynthetic process"/>
    <property type="evidence" value="ECO:0000314"/>
    <property type="project" value="UniProtKB"/>
</dbReference>
<dbReference type="Gene3D" id="3.40.50.720">
    <property type="entry name" value="NAD(P)-binding Rossmann-like Domain"/>
    <property type="match status" value="1"/>
</dbReference>
<dbReference type="InterPro" id="IPR036291">
    <property type="entry name" value="NAD(P)-bd_dom_sf"/>
</dbReference>
<dbReference type="InterPro" id="IPR020904">
    <property type="entry name" value="Sc_DH/Rdtase_CS"/>
</dbReference>
<dbReference type="InterPro" id="IPR002347">
    <property type="entry name" value="SDR_fam"/>
</dbReference>
<dbReference type="PANTHER" id="PTHR43658:SF8">
    <property type="entry name" value="17-BETA-HYDROXYSTEROID DEHYDROGENASE 14-RELATED"/>
    <property type="match status" value="1"/>
</dbReference>
<dbReference type="PANTHER" id="PTHR43658">
    <property type="entry name" value="SHORT-CHAIN DEHYDROGENASE/REDUCTASE"/>
    <property type="match status" value="1"/>
</dbReference>
<dbReference type="Pfam" id="PF00106">
    <property type="entry name" value="adh_short"/>
    <property type="match status" value="1"/>
</dbReference>
<dbReference type="PRINTS" id="PR00081">
    <property type="entry name" value="GDHRDH"/>
</dbReference>
<dbReference type="PRINTS" id="PR00080">
    <property type="entry name" value="SDRFAMILY"/>
</dbReference>
<dbReference type="SUPFAM" id="SSF51735">
    <property type="entry name" value="NAD(P)-binding Rossmann-fold domains"/>
    <property type="match status" value="1"/>
</dbReference>
<dbReference type="PROSITE" id="PS00061">
    <property type="entry name" value="ADH_SHORT"/>
    <property type="match status" value="1"/>
</dbReference>
<protein>
    <recommendedName>
        <fullName evidence="4">Ipsdienol dehydrogenase</fullName>
        <ecNumber evidence="3">1.1.1.386</ecNumber>
    </recommendedName>
</protein>
<name>IDLDH_IPSPI</name>
<keyword id="KW-0963">Cytoplasm</keyword>
<keyword id="KW-0520">NAD</keyword>
<keyword id="KW-0560">Oxidoreductase</keyword>
<evidence type="ECO:0000250" key="1">
    <source>
        <dbReference type="UniProtKB" id="P00334"/>
    </source>
</evidence>
<evidence type="ECO:0000255" key="2">
    <source>
        <dbReference type="PROSITE-ProRule" id="PRU10001"/>
    </source>
</evidence>
<evidence type="ECO:0000269" key="3">
    <source>
    </source>
</evidence>
<evidence type="ECO:0000303" key="4">
    <source>
    </source>
</evidence>
<evidence type="ECO:0000305" key="5"/>
<reference key="1">
    <citation type="journal article" date="2012" name="Insect Biochem. Mol. Biol.">
        <title>Ipsdienol dehydrogenase (IDOLDH): a novel oxidoreductase important for Ips pini pheromone production.</title>
        <authorList>
            <person name="Figueroa-Teran R."/>
            <person name="Welch W.H."/>
            <person name="Blomquist G.J."/>
            <person name="Tittiger C."/>
        </authorList>
    </citation>
    <scope>NUCLEOTIDE SEQUENCE [MRNA]</scope>
    <scope>FUNCTION</scope>
    <scope>CATALYTIC ACTIVITY</scope>
    <scope>BIOPHYSICOCHEMICAL PROPERTIES</scope>
    <scope>SUBCELLULAR LOCATION</scope>
    <scope>TISSUE SPECIFICITY</scope>
</reference>
<gene>
    <name evidence="4" type="primary">IDOLDH</name>
</gene>
<sequence>MMVKIQDSVYLVTGGGSGLGEATAKLLLTEGARVTIFSRNEYKNEFPHDQVLSVKGDVRSESDVKRALEATIQKFGKLDGVMHCAGVFQNGDELFNMDTQQPGDYTVLTDIVTTNLLGTFNVNRLAIPYFLTNQPDEEGQKGIIINCSSTSGHSPMSSAVAYSTSKAAIIGLSYALAKQLSTLGIRVMDIAPALCDTPMFRRAVGFNQDIANFRNLFPARLIQPIEYANAVKHIIETPMLNGSSYQLDGALRP</sequence>
<feature type="chain" id="PRO_0000433622" description="Ipsdienol dehydrogenase">
    <location>
        <begin position="1"/>
        <end position="253"/>
    </location>
</feature>
<feature type="active site" description="Proton acceptor" evidence="2">
    <location>
        <position position="162"/>
    </location>
</feature>
<feature type="binding site" evidence="1">
    <location>
        <begin position="12"/>
        <end position="40"/>
    </location>
    <ligand>
        <name>NAD(+)</name>
        <dbReference type="ChEBI" id="CHEBI:57540"/>
    </ligand>
</feature>
<feature type="binding site" evidence="1">
    <location>
        <position position="63"/>
    </location>
    <ligand>
        <name>NAD(+)</name>
        <dbReference type="ChEBI" id="CHEBI:57540"/>
    </ligand>
</feature>
<feature type="binding site" evidence="1">
    <location>
        <position position="149"/>
    </location>
    <ligand>
        <name>substrate</name>
    </ligand>
</feature>
<feature type="binding site" evidence="1">
    <location>
        <position position="166"/>
    </location>
    <ligand>
        <name>NAD(+)</name>
        <dbReference type="ChEBI" id="CHEBI:57540"/>
    </ligand>
</feature>